<accession>Q9YET5</accession>
<name>RNH2_AERPE</name>
<comment type="function">
    <text evidence="1">Endonuclease that specifically degrades the RNA of RNA-DNA hybrids.</text>
</comment>
<comment type="catalytic activity">
    <reaction>
        <text>Endonucleolytic cleavage to 5'-phosphomonoester.</text>
        <dbReference type="EC" id="3.1.26.4"/>
    </reaction>
</comment>
<comment type="cofactor">
    <cofactor evidence="1">
        <name>Mn(2+)</name>
        <dbReference type="ChEBI" id="CHEBI:29035"/>
    </cofactor>
    <cofactor evidence="1">
        <name>Mg(2+)</name>
        <dbReference type="ChEBI" id="CHEBI:18420"/>
    </cofactor>
    <text evidence="1">Manganese or magnesium. Binds 1 divalent metal ion per monomer in the absence of substrate. May bind a second metal ion after substrate binding.</text>
</comment>
<comment type="subcellular location">
    <subcellularLocation>
        <location evidence="3">Cytoplasm</location>
    </subcellularLocation>
</comment>
<comment type="similarity">
    <text evidence="3">Belongs to the RNase HII family.</text>
</comment>
<reference key="1">
    <citation type="journal article" date="1999" name="DNA Res.">
        <title>Complete genome sequence of an aerobic hyper-thermophilic crenarchaeon, Aeropyrum pernix K1.</title>
        <authorList>
            <person name="Kawarabayasi Y."/>
            <person name="Hino Y."/>
            <person name="Horikawa H."/>
            <person name="Yamazaki S."/>
            <person name="Haikawa Y."/>
            <person name="Jin-no K."/>
            <person name="Takahashi M."/>
            <person name="Sekine M."/>
            <person name="Baba S."/>
            <person name="Ankai A."/>
            <person name="Kosugi H."/>
            <person name="Hosoyama A."/>
            <person name="Fukui S."/>
            <person name="Nagai Y."/>
            <person name="Nishijima K."/>
            <person name="Nakazawa H."/>
            <person name="Takamiya M."/>
            <person name="Masuda S."/>
            <person name="Funahashi T."/>
            <person name="Tanaka T."/>
            <person name="Kudoh Y."/>
            <person name="Yamazaki J."/>
            <person name="Kushida N."/>
            <person name="Oguchi A."/>
            <person name="Aoki K."/>
            <person name="Kubota K."/>
            <person name="Nakamura Y."/>
            <person name="Nomura N."/>
            <person name="Sako Y."/>
            <person name="Kikuchi H."/>
        </authorList>
    </citation>
    <scope>NUCLEOTIDE SEQUENCE [LARGE SCALE GENOMIC DNA]</scope>
    <source>
        <strain>ATCC 700893 / DSM 11879 / JCM 9820 / NBRC 100138 / K1</strain>
    </source>
</reference>
<organism>
    <name type="scientific">Aeropyrum pernix (strain ATCC 700893 / DSM 11879 / JCM 9820 / NBRC 100138 / K1)</name>
    <dbReference type="NCBI Taxonomy" id="272557"/>
    <lineage>
        <taxon>Archaea</taxon>
        <taxon>Thermoproteota</taxon>
        <taxon>Thermoprotei</taxon>
        <taxon>Desulfurococcales</taxon>
        <taxon>Desulfurococcaceae</taxon>
        <taxon>Aeropyrum</taxon>
    </lineage>
</organism>
<evidence type="ECO:0000250" key="1"/>
<evidence type="ECO:0000255" key="2">
    <source>
        <dbReference type="PROSITE-ProRule" id="PRU01319"/>
    </source>
</evidence>
<evidence type="ECO:0000305" key="3"/>
<feature type="chain" id="PRO_0000111660" description="Ribonuclease HII">
    <location>
        <begin position="1"/>
        <end position="225"/>
    </location>
</feature>
<feature type="domain" description="RNase H type-2" evidence="2">
    <location>
        <begin position="2"/>
        <end position="210"/>
    </location>
</feature>
<feature type="binding site" evidence="1">
    <location>
        <position position="8"/>
    </location>
    <ligand>
        <name>a divalent metal cation</name>
        <dbReference type="ChEBI" id="CHEBI:60240"/>
    </ligand>
</feature>
<feature type="binding site" evidence="1">
    <location>
        <position position="9"/>
    </location>
    <ligand>
        <name>a divalent metal cation</name>
        <dbReference type="ChEBI" id="CHEBI:60240"/>
    </ligand>
</feature>
<feature type="binding site" evidence="1">
    <location>
        <position position="107"/>
    </location>
    <ligand>
        <name>a divalent metal cation</name>
        <dbReference type="ChEBI" id="CHEBI:60240"/>
    </ligand>
</feature>
<proteinExistence type="inferred from homology"/>
<dbReference type="EC" id="3.1.26.4"/>
<dbReference type="EMBL" id="BA000002">
    <property type="protein sequence ID" value="BAA79461.2"/>
    <property type="molecule type" value="Genomic_DNA"/>
</dbReference>
<dbReference type="PIR" id="A72746">
    <property type="entry name" value="A72746"/>
</dbReference>
<dbReference type="SMR" id="Q9YET5"/>
<dbReference type="STRING" id="272557.APE_0496.1"/>
<dbReference type="EnsemblBacteria" id="BAA79461">
    <property type="protein sequence ID" value="BAA79461"/>
    <property type="gene ID" value="APE_0496.1"/>
</dbReference>
<dbReference type="KEGG" id="ape:APE_0496.1"/>
<dbReference type="PATRIC" id="fig|272557.25.peg.376"/>
<dbReference type="eggNOG" id="arCOG04121">
    <property type="taxonomic scope" value="Archaea"/>
</dbReference>
<dbReference type="BRENDA" id="3.1.26.4">
    <property type="organism ID" value="171"/>
</dbReference>
<dbReference type="Proteomes" id="UP000002518">
    <property type="component" value="Chromosome"/>
</dbReference>
<dbReference type="GO" id="GO:0005737">
    <property type="term" value="C:cytoplasm"/>
    <property type="evidence" value="ECO:0007669"/>
    <property type="project" value="UniProtKB-SubCell"/>
</dbReference>
<dbReference type="GO" id="GO:0032299">
    <property type="term" value="C:ribonuclease H2 complex"/>
    <property type="evidence" value="ECO:0007669"/>
    <property type="project" value="TreeGrafter"/>
</dbReference>
<dbReference type="GO" id="GO:0030145">
    <property type="term" value="F:manganese ion binding"/>
    <property type="evidence" value="ECO:0007669"/>
    <property type="project" value="UniProtKB-UniRule"/>
</dbReference>
<dbReference type="GO" id="GO:0003723">
    <property type="term" value="F:RNA binding"/>
    <property type="evidence" value="ECO:0007669"/>
    <property type="project" value="InterPro"/>
</dbReference>
<dbReference type="GO" id="GO:0004523">
    <property type="term" value="F:RNA-DNA hybrid ribonuclease activity"/>
    <property type="evidence" value="ECO:0007669"/>
    <property type="project" value="UniProtKB-UniRule"/>
</dbReference>
<dbReference type="GO" id="GO:0043137">
    <property type="term" value="P:DNA replication, removal of RNA primer"/>
    <property type="evidence" value="ECO:0007669"/>
    <property type="project" value="TreeGrafter"/>
</dbReference>
<dbReference type="GO" id="GO:0006298">
    <property type="term" value="P:mismatch repair"/>
    <property type="evidence" value="ECO:0007669"/>
    <property type="project" value="TreeGrafter"/>
</dbReference>
<dbReference type="CDD" id="cd07180">
    <property type="entry name" value="RNase_HII_archaea_like"/>
    <property type="match status" value="1"/>
</dbReference>
<dbReference type="Gene3D" id="3.30.420.10">
    <property type="entry name" value="Ribonuclease H-like superfamily/Ribonuclease H"/>
    <property type="match status" value="1"/>
</dbReference>
<dbReference type="Gene3D" id="1.10.10.460">
    <property type="entry name" value="Ribonuclease hii. Domain 2"/>
    <property type="match status" value="1"/>
</dbReference>
<dbReference type="HAMAP" id="MF_00052_A">
    <property type="entry name" value="RNase_HII_A"/>
    <property type="match status" value="1"/>
</dbReference>
<dbReference type="InterPro" id="IPR004649">
    <property type="entry name" value="RNase_H2_suA"/>
</dbReference>
<dbReference type="InterPro" id="IPR001352">
    <property type="entry name" value="RNase_HII/HIII"/>
</dbReference>
<dbReference type="InterPro" id="IPR024567">
    <property type="entry name" value="RNase_HII/HIII_dom"/>
</dbReference>
<dbReference type="InterPro" id="IPR020787">
    <property type="entry name" value="RNase_HII_arc"/>
</dbReference>
<dbReference type="InterPro" id="IPR023160">
    <property type="entry name" value="RNase_HII_hlx-loop-hlx_cap_dom"/>
</dbReference>
<dbReference type="InterPro" id="IPR012337">
    <property type="entry name" value="RNaseH-like_sf"/>
</dbReference>
<dbReference type="InterPro" id="IPR036397">
    <property type="entry name" value="RNaseH_sf"/>
</dbReference>
<dbReference type="NCBIfam" id="TIGR00729">
    <property type="entry name" value="ribonuclease HII"/>
    <property type="match status" value="1"/>
</dbReference>
<dbReference type="PANTHER" id="PTHR10954:SF23">
    <property type="entry name" value="RIBONUCLEASE"/>
    <property type="match status" value="1"/>
</dbReference>
<dbReference type="PANTHER" id="PTHR10954">
    <property type="entry name" value="RIBONUCLEASE H2 SUBUNIT A"/>
    <property type="match status" value="1"/>
</dbReference>
<dbReference type="Pfam" id="PF01351">
    <property type="entry name" value="RNase_HII"/>
    <property type="match status" value="1"/>
</dbReference>
<dbReference type="SUPFAM" id="SSF53098">
    <property type="entry name" value="Ribonuclease H-like"/>
    <property type="match status" value="1"/>
</dbReference>
<dbReference type="PROSITE" id="PS51975">
    <property type="entry name" value="RNASE_H_2"/>
    <property type="match status" value="1"/>
</dbReference>
<sequence>MGIVVGVDEAGRGSLVGDLVVAGFAVEEARLGELQSLGVRDSKQLSPAARVELYREISGVGFFTVEAIRPWEIDGENINILVTKAVEEIVSRIVSYLGVHPSLVVVDKYGDVQGLRLALTRLGIEPRSILVEEKADSRYPVVSAASIVAKVVRDARLQVLRRMYGVRGSGYPSDPETREWVREVFARGEAPRVIRYTWSTVRKLGGPWRSKKAGRNRSLDEFLGG</sequence>
<keyword id="KW-0963">Cytoplasm</keyword>
<keyword id="KW-0255">Endonuclease</keyword>
<keyword id="KW-0378">Hydrolase</keyword>
<keyword id="KW-0464">Manganese</keyword>
<keyword id="KW-0479">Metal-binding</keyword>
<keyword id="KW-0540">Nuclease</keyword>
<keyword id="KW-1185">Reference proteome</keyword>
<protein>
    <recommendedName>
        <fullName>Ribonuclease HII</fullName>
        <shortName>RNase HII</shortName>
        <ecNumber>3.1.26.4</ecNumber>
    </recommendedName>
</protein>
<gene>
    <name type="primary">rnhB</name>
    <name type="ordered locus">APE_0496.1</name>
</gene>